<reference key="1">
    <citation type="journal article" date="2006" name="J. Virol.">
        <title>Genome of invertebrate iridescent virus type 3 (mosquito iridescent virus).</title>
        <authorList>
            <person name="Delhon G."/>
            <person name="Tulman E.R."/>
            <person name="Afonso C.L."/>
            <person name="Lu Z."/>
            <person name="Becnel J.J."/>
            <person name="Moser B.A."/>
            <person name="Kutish G.F."/>
            <person name="Rock D.L."/>
        </authorList>
    </citation>
    <scope>NUCLEOTIDE SEQUENCE [LARGE SCALE GENOMIC DNA]</scope>
</reference>
<dbReference type="EC" id="1.17.4.1"/>
<dbReference type="EMBL" id="DQ643392">
    <property type="protein sequence ID" value="ABF82095.1"/>
    <property type="molecule type" value="Genomic_DNA"/>
</dbReference>
<dbReference type="RefSeq" id="YP_654637.1">
    <property type="nucleotide sequence ID" value="NC_008187.1"/>
</dbReference>
<dbReference type="SMR" id="Q196Z5"/>
<dbReference type="KEGG" id="vg:4156315"/>
<dbReference type="OrthoDB" id="2980at10239"/>
<dbReference type="Proteomes" id="UP000001358">
    <property type="component" value="Genome"/>
</dbReference>
<dbReference type="GO" id="GO:0005524">
    <property type="term" value="F:ATP binding"/>
    <property type="evidence" value="ECO:0007669"/>
    <property type="project" value="InterPro"/>
</dbReference>
<dbReference type="GO" id="GO:0004748">
    <property type="term" value="F:ribonucleoside-diphosphate reductase activity, thioredoxin disulfide as acceptor"/>
    <property type="evidence" value="ECO:0007669"/>
    <property type="project" value="UniProtKB-EC"/>
</dbReference>
<dbReference type="GO" id="GO:0009263">
    <property type="term" value="P:deoxyribonucleotide biosynthetic process"/>
    <property type="evidence" value="ECO:0007669"/>
    <property type="project" value="UniProtKB-KW"/>
</dbReference>
<dbReference type="Gene3D" id="3.20.70.20">
    <property type="match status" value="1"/>
</dbReference>
<dbReference type="InterPro" id="IPR000788">
    <property type="entry name" value="RNR_lg_C"/>
</dbReference>
<dbReference type="InterPro" id="IPR013509">
    <property type="entry name" value="RNR_lsu_N"/>
</dbReference>
<dbReference type="InterPro" id="IPR008926">
    <property type="entry name" value="RNR_R1-su_N"/>
</dbReference>
<dbReference type="InterPro" id="IPR039718">
    <property type="entry name" value="Rrm1"/>
</dbReference>
<dbReference type="PANTHER" id="PTHR11573">
    <property type="entry name" value="RIBONUCLEOSIDE-DIPHOSPHATE REDUCTASE LARGE CHAIN"/>
    <property type="match status" value="1"/>
</dbReference>
<dbReference type="PANTHER" id="PTHR11573:SF6">
    <property type="entry name" value="RIBONUCLEOSIDE-DIPHOSPHATE REDUCTASE LARGE SUBUNIT"/>
    <property type="match status" value="1"/>
</dbReference>
<dbReference type="Pfam" id="PF02867">
    <property type="entry name" value="Ribonuc_red_lgC"/>
    <property type="match status" value="2"/>
</dbReference>
<dbReference type="Pfam" id="PF00317">
    <property type="entry name" value="Ribonuc_red_lgN"/>
    <property type="match status" value="1"/>
</dbReference>
<dbReference type="PRINTS" id="PR01183">
    <property type="entry name" value="RIBORDTASEM1"/>
</dbReference>
<dbReference type="SUPFAM" id="SSF51998">
    <property type="entry name" value="PFL-like glycyl radical enzymes"/>
    <property type="match status" value="2"/>
</dbReference>
<dbReference type="SUPFAM" id="SSF48168">
    <property type="entry name" value="R1 subunit of ribonucleotide reductase, N-terminal domain"/>
    <property type="match status" value="1"/>
</dbReference>
<organismHost>
    <name type="scientific">Aedes vexans</name>
    <name type="common">Inland floodwater mosquito</name>
    <name type="synonym">Culex vexans</name>
    <dbReference type="NCBI Taxonomy" id="7163"/>
</organismHost>
<organismHost>
    <name type="scientific">Culex territans</name>
    <dbReference type="NCBI Taxonomy" id="42431"/>
</organismHost>
<organismHost>
    <name type="scientific">Culiseta annulata</name>
    <dbReference type="NCBI Taxonomy" id="332058"/>
</organismHost>
<organismHost>
    <name type="scientific">Ochlerotatus sollicitans</name>
    <name type="common">eastern saltmarsh mosquito</name>
    <dbReference type="NCBI Taxonomy" id="310513"/>
</organismHost>
<organismHost>
    <name type="scientific">Ochlerotatus taeniorhynchus</name>
    <name type="common">Black salt marsh mosquito</name>
    <name type="synonym">Aedes taeniorhynchus</name>
    <dbReference type="NCBI Taxonomy" id="329105"/>
</organismHost>
<organismHost>
    <name type="scientific">Psorophora ferox</name>
    <dbReference type="NCBI Taxonomy" id="7183"/>
</organismHost>
<proteinExistence type="inferred from homology"/>
<accession>Q196Z5</accession>
<feature type="chain" id="PRO_0000376950" description="Ribonucleoside-diphosphate reductase large subunit">
    <location>
        <begin position="1"/>
        <end position="630"/>
    </location>
</feature>
<feature type="active site" description="Proton acceptor" evidence="1">
    <location>
        <position position="317"/>
    </location>
</feature>
<feature type="active site" description="Cysteine radical intermediate" evidence="1">
    <location>
        <position position="319"/>
    </location>
</feature>
<feature type="active site" description="Proton acceptor" evidence="1">
    <location>
        <position position="321"/>
    </location>
</feature>
<feature type="binding site" evidence="1">
    <location>
        <position position="67"/>
    </location>
    <ligand>
        <name>substrate</name>
    </ligand>
</feature>
<feature type="binding site" evidence="1">
    <location>
        <begin position="82"/>
        <end position="83"/>
    </location>
    <ligand>
        <name>substrate</name>
    </ligand>
</feature>
<feature type="binding site" evidence="1">
    <location>
        <position position="111"/>
    </location>
    <ligand>
        <name>substrate</name>
    </ligand>
</feature>
<feature type="binding site" evidence="1">
    <location>
        <begin position="317"/>
        <end position="321"/>
    </location>
    <ligand>
        <name>substrate</name>
    </ligand>
</feature>
<feature type="binding site" evidence="1">
    <location>
        <begin position="459"/>
        <end position="463"/>
    </location>
    <ligand>
        <name>substrate</name>
    </ligand>
</feature>
<feature type="site" description="Important for hydrogen atom transfer" evidence="1">
    <location>
        <position position="83"/>
    </location>
</feature>
<feature type="site" description="Allosteric effector binding" evidence="1">
    <location>
        <position position="90"/>
    </location>
</feature>
<feature type="site" description="Allosteric effector binding" evidence="1">
    <location>
        <position position="119"/>
    </location>
</feature>
<feature type="site" description="Important for hydrogen atom transfer" evidence="1">
    <location>
        <position position="334"/>
    </location>
</feature>
<feature type="site" description="Important for electron transfer" evidence="1">
    <location>
        <position position="597"/>
    </location>
</feature>
<feature type="site" description="Important for electron transfer" evidence="1">
    <location>
        <position position="598"/>
    </location>
</feature>
<feature type="site" description="Interacts with thioredoxin/glutaredoxin" evidence="1">
    <location>
        <position position="625"/>
    </location>
</feature>
<feature type="site" description="Interacts with thioredoxin/glutaredoxin" evidence="1">
    <location>
        <position position="628"/>
    </location>
</feature>
<feature type="disulfide bond" description="Redox-active" evidence="1">
    <location>
        <begin position="83"/>
        <end position="334"/>
    </location>
</feature>
<organism>
    <name type="scientific">Invertebrate iridescent virus 3</name>
    <name type="common">IIV-3</name>
    <name type="synonym">Mosquito iridescent virus</name>
    <dbReference type="NCBI Taxonomy" id="345201"/>
    <lineage>
        <taxon>Viruses</taxon>
        <taxon>Varidnaviria</taxon>
        <taxon>Bamfordvirae</taxon>
        <taxon>Nucleocytoviricota</taxon>
        <taxon>Megaviricetes</taxon>
        <taxon>Pimascovirales</taxon>
        <taxon>Iridoviridae</taxon>
        <taxon>Betairidovirinae</taxon>
        <taxon>Chloriridovirus</taxon>
    </lineage>
</organism>
<gene>
    <name type="ORF">IIV3-065R</name>
</gene>
<comment type="function">
    <text evidence="1">Ribonucleoside-diphosphate reductase holoenzyme provides the precursors necessary for viral DNA synthesis. Allows virus growth in non-dividing cells. Catalyzes the biosynthesis of deoxyribonucleotides from the corresponding ribonucleotides (By similarity).</text>
</comment>
<comment type="catalytic activity">
    <reaction>
        <text>a 2'-deoxyribonucleoside 5'-diphosphate + [thioredoxin]-disulfide + H2O = a ribonucleoside 5'-diphosphate + [thioredoxin]-dithiol</text>
        <dbReference type="Rhea" id="RHEA:23252"/>
        <dbReference type="Rhea" id="RHEA-COMP:10698"/>
        <dbReference type="Rhea" id="RHEA-COMP:10700"/>
        <dbReference type="ChEBI" id="CHEBI:15377"/>
        <dbReference type="ChEBI" id="CHEBI:29950"/>
        <dbReference type="ChEBI" id="CHEBI:50058"/>
        <dbReference type="ChEBI" id="CHEBI:57930"/>
        <dbReference type="ChEBI" id="CHEBI:73316"/>
        <dbReference type="EC" id="1.17.4.1"/>
    </reaction>
</comment>
<comment type="activity regulation">
    <text evidence="1">Under complex allosteric control mediated by deoxynucleoside triphosphates and ATP binding. The type of nucleotide bound at the specificity site determines substrate preference. It seems probable that ATP makes the enzyme reduce CDP and UDP, dGTP favors ADP reduction and dTTP favors GDP reduction (By similarity).</text>
</comment>
<comment type="subunit">
    <text evidence="1">Heterotetramer composed of a homodimer of the large subunit (R1) and a homodimer of the small subunit (R2). Larger multisubunit protein complex are also active, composed of (R1)n(R2)n (By similarity).</text>
</comment>
<comment type="similarity">
    <text evidence="2">Belongs to the ribonucleoside diphosphate reductase large chain family.</text>
</comment>
<keyword id="KW-0215">Deoxyribonucleotide synthesis</keyword>
<keyword id="KW-1015">Disulfide bond</keyword>
<keyword id="KW-0560">Oxidoreductase</keyword>
<keyword id="KW-1185">Reference proteome</keyword>
<name>RIR1_IIV3</name>
<evidence type="ECO:0000250" key="1"/>
<evidence type="ECO:0000305" key="2"/>
<protein>
    <recommendedName>
        <fullName>Ribonucleoside-diphosphate reductase large subunit</fullName>
        <ecNumber>1.17.4.1</ecNumber>
    </recommendedName>
    <alternativeName>
        <fullName>Ribonucleotide reductase large subunit</fullName>
    </alternativeName>
</protein>
<sequence length="630" mass="71757">MITIDESRNNLFDALGLQRLKDSYMKEDESSPQERFAFIARQFCADDEPLAQRLYDYMSQHWLSPSSPQLSFGRTKQGLPIACFLPYLHDTARGLIDTWAEVSELSMIGGGIGLGVGIRQPDEKSVGIIPHLRTYDASCTAYKQGQTRRGSYAAYLDISHPEILSFLNTRRVGGDHNYKLLNLHNGVNVPDSFMKKIWILSTLAPFVKMDPCPTTETLFKKAVTTLKDSRYFGADDRWLGEVSFAALAEQLDVVNRWDLIDPHTGKVKETIKATELWERIILTRAETGEPYIHWIDTSNRALPQFQKNLGLSIRQSNLCSEVVLPTDETRTAVCCLASLNLDYFDKWCNNEQFYLDVATYLDNVLQYFIDHAPPTLKRAVHSARSERAIGIGALGFHSYLQSKMVDIESLPAYLINKKIFKTISSHLERVNLELGELRGEAPDCVGTGRRFSHMTAIAPNATSSIIMGNTSPSCEPFRANIYKQDTISGSFVTYNKHLKRLLEERIPDNQARERVWSSIKMHDGSVQHLNQLTVQEKKVFKTWPEINQLSLVMLAADRQKWIDQSQSTSLFFNPDERISYVHKIHLKAWLHGLKTLYYFRSRKILTVDKVHHTTTTADPKTENDCTFCEG</sequence>